<gene>
    <name evidence="1" type="primary">nuoH</name>
    <name type="ordered locus">Pnap_1431</name>
</gene>
<organism>
    <name type="scientific">Polaromonas naphthalenivorans (strain CJ2)</name>
    <dbReference type="NCBI Taxonomy" id="365044"/>
    <lineage>
        <taxon>Bacteria</taxon>
        <taxon>Pseudomonadati</taxon>
        <taxon>Pseudomonadota</taxon>
        <taxon>Betaproteobacteria</taxon>
        <taxon>Burkholderiales</taxon>
        <taxon>Comamonadaceae</taxon>
        <taxon>Polaromonas</taxon>
    </lineage>
</organism>
<reference key="1">
    <citation type="journal article" date="2009" name="Environ. Microbiol.">
        <title>The genome of Polaromonas naphthalenivorans strain CJ2, isolated from coal tar-contaminated sediment, reveals physiological and metabolic versatility and evolution through extensive horizontal gene transfer.</title>
        <authorList>
            <person name="Yagi J.M."/>
            <person name="Sims D."/>
            <person name="Brettin T."/>
            <person name="Bruce D."/>
            <person name="Madsen E.L."/>
        </authorList>
    </citation>
    <scope>NUCLEOTIDE SEQUENCE [LARGE SCALE GENOMIC DNA]</scope>
    <source>
        <strain>CJ2</strain>
    </source>
</reference>
<proteinExistence type="inferred from homology"/>
<sequence length="359" mass="39555">MIDAMYATGQGLMGGIWPATVWPVLWVLIKIVAVLAPLMGCVAYLTLWERKAIGFTQVRVGPNRIGPFGLLQPIADALKLLTKEIIIPTAASKGLFILGPIMTIMPALAAWAVIPFGPDVALANVNAGLLFIMAITSLEVYGVIIAGWGSNSKYAFLGAMRASAQMVSYEIAMGFCLVVVLMVSGSLNMTDIVMSQGSGMAASKGLTFLSWNWLPLLPIFVVYFISSLAETNRHPFDVVEGESEIVAGHMVEYSGMSFAMFFLAEYANMILVSVLCVLLFLGGWLSPIDSALFTWIPGWIWLGLKTFVVVTIFLWVRSTFPRFRYDQIMRLGWKIFIPVTLVWLVVVGAWMQTPYNIWK</sequence>
<dbReference type="EC" id="7.1.1.-" evidence="1"/>
<dbReference type="EMBL" id="CP000529">
    <property type="protein sequence ID" value="ABM36745.1"/>
    <property type="status" value="ALT_INIT"/>
    <property type="molecule type" value="Genomic_DNA"/>
</dbReference>
<dbReference type="RefSeq" id="WP_041376591.1">
    <property type="nucleotide sequence ID" value="NC_008781.1"/>
</dbReference>
<dbReference type="SMR" id="A1VM67"/>
<dbReference type="STRING" id="365044.Pnap_1431"/>
<dbReference type="KEGG" id="pna:Pnap_1431"/>
<dbReference type="eggNOG" id="COG1005">
    <property type="taxonomic scope" value="Bacteria"/>
</dbReference>
<dbReference type="HOGENOM" id="CLU_015134_0_1_4"/>
<dbReference type="OrthoDB" id="9803734at2"/>
<dbReference type="Proteomes" id="UP000000644">
    <property type="component" value="Chromosome"/>
</dbReference>
<dbReference type="GO" id="GO:0005886">
    <property type="term" value="C:plasma membrane"/>
    <property type="evidence" value="ECO:0007669"/>
    <property type="project" value="UniProtKB-SubCell"/>
</dbReference>
<dbReference type="GO" id="GO:0003954">
    <property type="term" value="F:NADH dehydrogenase activity"/>
    <property type="evidence" value="ECO:0007669"/>
    <property type="project" value="TreeGrafter"/>
</dbReference>
<dbReference type="GO" id="GO:0016655">
    <property type="term" value="F:oxidoreductase activity, acting on NAD(P)H, quinone or similar compound as acceptor"/>
    <property type="evidence" value="ECO:0007669"/>
    <property type="project" value="UniProtKB-UniRule"/>
</dbReference>
<dbReference type="GO" id="GO:0048038">
    <property type="term" value="F:quinone binding"/>
    <property type="evidence" value="ECO:0007669"/>
    <property type="project" value="UniProtKB-KW"/>
</dbReference>
<dbReference type="GO" id="GO:0009060">
    <property type="term" value="P:aerobic respiration"/>
    <property type="evidence" value="ECO:0007669"/>
    <property type="project" value="TreeGrafter"/>
</dbReference>
<dbReference type="HAMAP" id="MF_01350">
    <property type="entry name" value="NDH1_NuoH"/>
    <property type="match status" value="1"/>
</dbReference>
<dbReference type="InterPro" id="IPR001694">
    <property type="entry name" value="NADH_UbQ_OxRdtase_su1/FPO"/>
</dbReference>
<dbReference type="InterPro" id="IPR018086">
    <property type="entry name" value="NADH_UbQ_OxRdtase_su1_CS"/>
</dbReference>
<dbReference type="NCBIfam" id="NF004741">
    <property type="entry name" value="PRK06076.1-2"/>
    <property type="match status" value="1"/>
</dbReference>
<dbReference type="NCBIfam" id="NF004742">
    <property type="entry name" value="PRK06076.1-3"/>
    <property type="match status" value="1"/>
</dbReference>
<dbReference type="PANTHER" id="PTHR11432">
    <property type="entry name" value="NADH DEHYDROGENASE SUBUNIT 1"/>
    <property type="match status" value="1"/>
</dbReference>
<dbReference type="PANTHER" id="PTHR11432:SF3">
    <property type="entry name" value="NADH-UBIQUINONE OXIDOREDUCTASE CHAIN 1"/>
    <property type="match status" value="1"/>
</dbReference>
<dbReference type="Pfam" id="PF00146">
    <property type="entry name" value="NADHdh"/>
    <property type="match status" value="1"/>
</dbReference>
<dbReference type="PROSITE" id="PS00667">
    <property type="entry name" value="COMPLEX1_ND1_1"/>
    <property type="match status" value="1"/>
</dbReference>
<dbReference type="PROSITE" id="PS00668">
    <property type="entry name" value="COMPLEX1_ND1_2"/>
    <property type="match status" value="1"/>
</dbReference>
<feature type="chain" id="PRO_0000298836" description="NADH-quinone oxidoreductase subunit H">
    <location>
        <begin position="1"/>
        <end position="359"/>
    </location>
</feature>
<feature type="transmembrane region" description="Helical" evidence="1">
    <location>
        <begin position="16"/>
        <end position="36"/>
    </location>
</feature>
<feature type="transmembrane region" description="Helical" evidence="1">
    <location>
        <begin position="94"/>
        <end position="114"/>
    </location>
</feature>
<feature type="transmembrane region" description="Helical" evidence="1">
    <location>
        <begin position="128"/>
        <end position="148"/>
    </location>
</feature>
<feature type="transmembrane region" description="Helical" evidence="1">
    <location>
        <begin position="167"/>
        <end position="187"/>
    </location>
</feature>
<feature type="transmembrane region" description="Helical" evidence="1">
    <location>
        <begin position="205"/>
        <end position="225"/>
    </location>
</feature>
<feature type="transmembrane region" description="Helical" evidence="1">
    <location>
        <begin position="261"/>
        <end position="281"/>
    </location>
</feature>
<feature type="transmembrane region" description="Helical" evidence="1">
    <location>
        <begin position="296"/>
        <end position="316"/>
    </location>
</feature>
<feature type="transmembrane region" description="Helical" evidence="1">
    <location>
        <begin position="331"/>
        <end position="351"/>
    </location>
</feature>
<name>NUOH_POLNA</name>
<evidence type="ECO:0000255" key="1">
    <source>
        <dbReference type="HAMAP-Rule" id="MF_01350"/>
    </source>
</evidence>
<evidence type="ECO:0000305" key="2"/>
<comment type="function">
    <text evidence="1">NDH-1 shuttles electrons from NADH, via FMN and iron-sulfur (Fe-S) centers, to quinones in the respiratory chain. The immediate electron acceptor for the enzyme in this species is believed to be ubiquinone. Couples the redox reaction to proton translocation (for every two electrons transferred, four hydrogen ions are translocated across the cytoplasmic membrane), and thus conserves the redox energy in a proton gradient. This subunit may bind ubiquinone.</text>
</comment>
<comment type="catalytic activity">
    <reaction evidence="1">
        <text>a quinone + NADH + 5 H(+)(in) = a quinol + NAD(+) + 4 H(+)(out)</text>
        <dbReference type="Rhea" id="RHEA:57888"/>
        <dbReference type="ChEBI" id="CHEBI:15378"/>
        <dbReference type="ChEBI" id="CHEBI:24646"/>
        <dbReference type="ChEBI" id="CHEBI:57540"/>
        <dbReference type="ChEBI" id="CHEBI:57945"/>
        <dbReference type="ChEBI" id="CHEBI:132124"/>
    </reaction>
</comment>
<comment type="subunit">
    <text evidence="1">NDH-1 is composed of 14 different subunits. Subunits NuoA, H, J, K, L, M, N constitute the membrane sector of the complex.</text>
</comment>
<comment type="subcellular location">
    <subcellularLocation>
        <location evidence="1">Cell inner membrane</location>
        <topology evidence="1">Multi-pass membrane protein</topology>
    </subcellularLocation>
</comment>
<comment type="similarity">
    <text evidence="1">Belongs to the complex I subunit 1 family.</text>
</comment>
<comment type="sequence caution" evidence="2">
    <conflict type="erroneous initiation">
        <sequence resource="EMBL-CDS" id="ABM36745"/>
    </conflict>
</comment>
<keyword id="KW-0997">Cell inner membrane</keyword>
<keyword id="KW-1003">Cell membrane</keyword>
<keyword id="KW-0472">Membrane</keyword>
<keyword id="KW-0520">NAD</keyword>
<keyword id="KW-0874">Quinone</keyword>
<keyword id="KW-1185">Reference proteome</keyword>
<keyword id="KW-1278">Translocase</keyword>
<keyword id="KW-0812">Transmembrane</keyword>
<keyword id="KW-1133">Transmembrane helix</keyword>
<keyword id="KW-0830">Ubiquinone</keyword>
<protein>
    <recommendedName>
        <fullName evidence="1">NADH-quinone oxidoreductase subunit H</fullName>
        <ecNumber evidence="1">7.1.1.-</ecNumber>
    </recommendedName>
    <alternativeName>
        <fullName evidence="1">NADH dehydrogenase I subunit H</fullName>
    </alternativeName>
    <alternativeName>
        <fullName evidence="1">NDH-1 subunit H</fullName>
    </alternativeName>
</protein>
<accession>A1VM67</accession>